<accession>B4SFE7</accession>
<feature type="chain" id="PRO_1000115563" description="Trigger factor">
    <location>
        <begin position="1"/>
        <end position="426"/>
    </location>
</feature>
<feature type="domain" description="PPIase FKBP-type" evidence="1">
    <location>
        <begin position="165"/>
        <end position="239"/>
    </location>
</feature>
<gene>
    <name evidence="1" type="primary">tig</name>
    <name type="ordered locus">Ppha_2564</name>
</gene>
<protein>
    <recommendedName>
        <fullName evidence="1">Trigger factor</fullName>
        <shortName evidence="1">TF</shortName>
        <ecNumber evidence="1">5.2.1.8</ecNumber>
    </recommendedName>
    <alternativeName>
        <fullName evidence="1">PPIase</fullName>
    </alternativeName>
</protein>
<comment type="function">
    <text evidence="1">Involved in protein export. Acts as a chaperone by maintaining the newly synthesized protein in an open conformation. Functions as a peptidyl-prolyl cis-trans isomerase.</text>
</comment>
<comment type="catalytic activity">
    <reaction evidence="1">
        <text>[protein]-peptidylproline (omega=180) = [protein]-peptidylproline (omega=0)</text>
        <dbReference type="Rhea" id="RHEA:16237"/>
        <dbReference type="Rhea" id="RHEA-COMP:10747"/>
        <dbReference type="Rhea" id="RHEA-COMP:10748"/>
        <dbReference type="ChEBI" id="CHEBI:83833"/>
        <dbReference type="ChEBI" id="CHEBI:83834"/>
        <dbReference type="EC" id="5.2.1.8"/>
    </reaction>
</comment>
<comment type="subcellular location">
    <subcellularLocation>
        <location>Cytoplasm</location>
    </subcellularLocation>
    <text evidence="1">About half TF is bound to the ribosome near the polypeptide exit tunnel while the other half is free in the cytoplasm.</text>
</comment>
<comment type="domain">
    <text evidence="1">Consists of 3 domains; the N-terminus binds the ribosome, the middle domain has PPIase activity, while the C-terminus has intrinsic chaperone activity on its own.</text>
</comment>
<comment type="similarity">
    <text evidence="1">Belongs to the FKBP-type PPIase family. Tig subfamily.</text>
</comment>
<sequence>MQKNIKNVSETEQELEIILSAEEFGTEYNQELEEAKRNIQIKGFRKGHAPASLIKKLAGPSIEATVAEKMASKYFGEIADAEKIKPASRAQIIDVAFAPEELKITLAYEIHPEFEVKDFSGYTFTQNRYVITDEDITREINLILKGHGTLNTVDEAALSTDTVIGDVYKLNEAGETDDDQKTDNHHFTLEYLPEENPFRKALTGKKAGESVDIENDEKESAQPSRFRVVISEIKRLELPELTDELVKEITGGRFESVTDFTADVRIQLEQHFLLKSDEELLESLSAKLIEENPVPAPNSMIASFSKMLLENAKRQMGGSFPKGFDDEQFRLAMKPNAEKHAQWLMISQKIAEDATLSVSDDDIKAYADKEAEKSESMDAEEILKTYLSPEFRDYITDTILKEKIYNIIKSKVTITEEEKSIPVRQE</sequence>
<dbReference type="EC" id="5.2.1.8" evidence="1"/>
<dbReference type="EMBL" id="CP001110">
    <property type="protein sequence ID" value="ACF44726.1"/>
    <property type="molecule type" value="Genomic_DNA"/>
</dbReference>
<dbReference type="RefSeq" id="WP_012509199.1">
    <property type="nucleotide sequence ID" value="NC_011060.1"/>
</dbReference>
<dbReference type="SMR" id="B4SFE7"/>
<dbReference type="STRING" id="324925.Ppha_2564"/>
<dbReference type="KEGG" id="pph:Ppha_2564"/>
<dbReference type="eggNOG" id="COG0544">
    <property type="taxonomic scope" value="Bacteria"/>
</dbReference>
<dbReference type="HOGENOM" id="CLU_033058_3_1_10"/>
<dbReference type="OrthoDB" id="9767721at2"/>
<dbReference type="Proteomes" id="UP000002724">
    <property type="component" value="Chromosome"/>
</dbReference>
<dbReference type="GO" id="GO:0005737">
    <property type="term" value="C:cytoplasm"/>
    <property type="evidence" value="ECO:0007669"/>
    <property type="project" value="UniProtKB-SubCell"/>
</dbReference>
<dbReference type="GO" id="GO:0003755">
    <property type="term" value="F:peptidyl-prolyl cis-trans isomerase activity"/>
    <property type="evidence" value="ECO:0007669"/>
    <property type="project" value="UniProtKB-UniRule"/>
</dbReference>
<dbReference type="GO" id="GO:0051301">
    <property type="term" value="P:cell division"/>
    <property type="evidence" value="ECO:0007669"/>
    <property type="project" value="UniProtKB-KW"/>
</dbReference>
<dbReference type="GO" id="GO:0006457">
    <property type="term" value="P:protein folding"/>
    <property type="evidence" value="ECO:0007669"/>
    <property type="project" value="UniProtKB-UniRule"/>
</dbReference>
<dbReference type="GO" id="GO:0015031">
    <property type="term" value="P:protein transport"/>
    <property type="evidence" value="ECO:0007669"/>
    <property type="project" value="UniProtKB-UniRule"/>
</dbReference>
<dbReference type="Gene3D" id="3.10.50.40">
    <property type="match status" value="1"/>
</dbReference>
<dbReference type="Gene3D" id="3.30.70.1050">
    <property type="entry name" value="Trigger factor ribosome-binding domain"/>
    <property type="match status" value="1"/>
</dbReference>
<dbReference type="Gene3D" id="1.10.3120.10">
    <property type="entry name" value="Trigger factor, C-terminal domain"/>
    <property type="match status" value="1"/>
</dbReference>
<dbReference type="HAMAP" id="MF_00303">
    <property type="entry name" value="Trigger_factor_Tig"/>
    <property type="match status" value="1"/>
</dbReference>
<dbReference type="InterPro" id="IPR046357">
    <property type="entry name" value="PPIase_dom_sf"/>
</dbReference>
<dbReference type="InterPro" id="IPR005215">
    <property type="entry name" value="Trig_fac"/>
</dbReference>
<dbReference type="InterPro" id="IPR008880">
    <property type="entry name" value="Trigger_fac_C"/>
</dbReference>
<dbReference type="InterPro" id="IPR037041">
    <property type="entry name" value="Trigger_fac_C_sf"/>
</dbReference>
<dbReference type="InterPro" id="IPR008881">
    <property type="entry name" value="Trigger_fac_ribosome-bd_bac"/>
</dbReference>
<dbReference type="InterPro" id="IPR036611">
    <property type="entry name" value="Trigger_fac_ribosome-bd_sf"/>
</dbReference>
<dbReference type="InterPro" id="IPR027304">
    <property type="entry name" value="Trigger_fact/SurA_dom_sf"/>
</dbReference>
<dbReference type="NCBIfam" id="TIGR00115">
    <property type="entry name" value="tig"/>
    <property type="match status" value="1"/>
</dbReference>
<dbReference type="Pfam" id="PF05698">
    <property type="entry name" value="Trigger_C"/>
    <property type="match status" value="1"/>
</dbReference>
<dbReference type="Pfam" id="PF05697">
    <property type="entry name" value="Trigger_N"/>
    <property type="match status" value="1"/>
</dbReference>
<dbReference type="PIRSF" id="PIRSF003095">
    <property type="entry name" value="Trigger_factor"/>
    <property type="match status" value="1"/>
</dbReference>
<dbReference type="SUPFAM" id="SSF54534">
    <property type="entry name" value="FKBP-like"/>
    <property type="match status" value="1"/>
</dbReference>
<dbReference type="SUPFAM" id="SSF109998">
    <property type="entry name" value="Triger factor/SurA peptide-binding domain-like"/>
    <property type="match status" value="1"/>
</dbReference>
<dbReference type="SUPFAM" id="SSF102735">
    <property type="entry name" value="Trigger factor ribosome-binding domain"/>
    <property type="match status" value="1"/>
</dbReference>
<evidence type="ECO:0000255" key="1">
    <source>
        <dbReference type="HAMAP-Rule" id="MF_00303"/>
    </source>
</evidence>
<name>TIG_PELPB</name>
<organism>
    <name type="scientific">Pelodictyon phaeoclathratiforme (strain DSM 5477 / BU-1)</name>
    <dbReference type="NCBI Taxonomy" id="324925"/>
    <lineage>
        <taxon>Bacteria</taxon>
        <taxon>Pseudomonadati</taxon>
        <taxon>Chlorobiota</taxon>
        <taxon>Chlorobiia</taxon>
        <taxon>Chlorobiales</taxon>
        <taxon>Chlorobiaceae</taxon>
        <taxon>Chlorobium/Pelodictyon group</taxon>
        <taxon>Pelodictyon</taxon>
    </lineage>
</organism>
<proteinExistence type="inferred from homology"/>
<reference key="1">
    <citation type="submission" date="2008-06" db="EMBL/GenBank/DDBJ databases">
        <title>Complete sequence of Pelodictyon phaeoclathratiforme BU-1.</title>
        <authorList>
            <consortium name="US DOE Joint Genome Institute"/>
            <person name="Lucas S."/>
            <person name="Copeland A."/>
            <person name="Lapidus A."/>
            <person name="Glavina del Rio T."/>
            <person name="Dalin E."/>
            <person name="Tice H."/>
            <person name="Bruce D."/>
            <person name="Goodwin L."/>
            <person name="Pitluck S."/>
            <person name="Schmutz J."/>
            <person name="Larimer F."/>
            <person name="Land M."/>
            <person name="Hauser L."/>
            <person name="Kyrpides N."/>
            <person name="Mikhailova N."/>
            <person name="Liu Z."/>
            <person name="Li T."/>
            <person name="Zhao F."/>
            <person name="Overmann J."/>
            <person name="Bryant D.A."/>
            <person name="Richardson P."/>
        </authorList>
    </citation>
    <scope>NUCLEOTIDE SEQUENCE [LARGE SCALE GENOMIC DNA]</scope>
    <source>
        <strain>DSM 5477 / BU-1</strain>
    </source>
</reference>
<keyword id="KW-0131">Cell cycle</keyword>
<keyword id="KW-0132">Cell division</keyword>
<keyword id="KW-0143">Chaperone</keyword>
<keyword id="KW-0963">Cytoplasm</keyword>
<keyword id="KW-0413">Isomerase</keyword>
<keyword id="KW-1185">Reference proteome</keyword>
<keyword id="KW-0697">Rotamase</keyword>